<proteinExistence type="inferred from homology"/>
<keyword id="KW-0028">Amino-acid biosynthesis</keyword>
<keyword id="KW-0170">Cobalt</keyword>
<keyword id="KW-0220">Diaminopimelate biosynthesis</keyword>
<keyword id="KW-0378">Hydrolase</keyword>
<keyword id="KW-0457">Lysine biosynthesis</keyword>
<keyword id="KW-0479">Metal-binding</keyword>
<keyword id="KW-1185">Reference proteome</keyword>
<keyword id="KW-0862">Zinc</keyword>
<accession>A7HPQ6</accession>
<name>DAPE_PARL1</name>
<organism>
    <name type="scientific">Parvibaculum lavamentivorans (strain DS-1 / DSM 13023 / NCIMB 13966)</name>
    <dbReference type="NCBI Taxonomy" id="402881"/>
    <lineage>
        <taxon>Bacteria</taxon>
        <taxon>Pseudomonadati</taxon>
        <taxon>Pseudomonadota</taxon>
        <taxon>Alphaproteobacteria</taxon>
        <taxon>Hyphomicrobiales</taxon>
        <taxon>Parvibaculaceae</taxon>
        <taxon>Parvibaculum</taxon>
    </lineage>
</organism>
<dbReference type="EC" id="3.5.1.18" evidence="1"/>
<dbReference type="EMBL" id="CP000774">
    <property type="protein sequence ID" value="ABS61889.1"/>
    <property type="molecule type" value="Genomic_DNA"/>
</dbReference>
<dbReference type="RefSeq" id="WP_011995180.1">
    <property type="nucleotide sequence ID" value="NC_009719.1"/>
</dbReference>
<dbReference type="SMR" id="A7HPQ6"/>
<dbReference type="STRING" id="402881.Plav_0266"/>
<dbReference type="KEGG" id="pla:Plav_0266"/>
<dbReference type="eggNOG" id="COG0624">
    <property type="taxonomic scope" value="Bacteria"/>
</dbReference>
<dbReference type="HOGENOM" id="CLU_021802_4_0_5"/>
<dbReference type="OrthoDB" id="9809784at2"/>
<dbReference type="UniPathway" id="UPA00034">
    <property type="reaction ID" value="UER00021"/>
</dbReference>
<dbReference type="Proteomes" id="UP000006377">
    <property type="component" value="Chromosome"/>
</dbReference>
<dbReference type="GO" id="GO:0008777">
    <property type="term" value="F:acetylornithine deacetylase activity"/>
    <property type="evidence" value="ECO:0007669"/>
    <property type="project" value="TreeGrafter"/>
</dbReference>
<dbReference type="GO" id="GO:0050897">
    <property type="term" value="F:cobalt ion binding"/>
    <property type="evidence" value="ECO:0007669"/>
    <property type="project" value="UniProtKB-UniRule"/>
</dbReference>
<dbReference type="GO" id="GO:0009014">
    <property type="term" value="F:succinyl-diaminopimelate desuccinylase activity"/>
    <property type="evidence" value="ECO:0007669"/>
    <property type="project" value="UniProtKB-UniRule"/>
</dbReference>
<dbReference type="GO" id="GO:0008270">
    <property type="term" value="F:zinc ion binding"/>
    <property type="evidence" value="ECO:0007669"/>
    <property type="project" value="UniProtKB-UniRule"/>
</dbReference>
<dbReference type="GO" id="GO:0019877">
    <property type="term" value="P:diaminopimelate biosynthetic process"/>
    <property type="evidence" value="ECO:0007669"/>
    <property type="project" value="UniProtKB-UniRule"/>
</dbReference>
<dbReference type="GO" id="GO:0006526">
    <property type="term" value="P:L-arginine biosynthetic process"/>
    <property type="evidence" value="ECO:0007669"/>
    <property type="project" value="TreeGrafter"/>
</dbReference>
<dbReference type="GO" id="GO:0009089">
    <property type="term" value="P:lysine biosynthetic process via diaminopimelate"/>
    <property type="evidence" value="ECO:0007669"/>
    <property type="project" value="UniProtKB-UniRule"/>
</dbReference>
<dbReference type="CDD" id="cd03891">
    <property type="entry name" value="M20_DapE_proteobac"/>
    <property type="match status" value="1"/>
</dbReference>
<dbReference type="Gene3D" id="3.40.630.10">
    <property type="entry name" value="Zn peptidases"/>
    <property type="match status" value="2"/>
</dbReference>
<dbReference type="HAMAP" id="MF_01690">
    <property type="entry name" value="DapE"/>
    <property type="match status" value="1"/>
</dbReference>
<dbReference type="InterPro" id="IPR001261">
    <property type="entry name" value="ArgE/DapE_CS"/>
</dbReference>
<dbReference type="InterPro" id="IPR036264">
    <property type="entry name" value="Bact_exopeptidase_dim_dom"/>
</dbReference>
<dbReference type="InterPro" id="IPR005941">
    <property type="entry name" value="DapE_proteobac"/>
</dbReference>
<dbReference type="InterPro" id="IPR002933">
    <property type="entry name" value="Peptidase_M20"/>
</dbReference>
<dbReference type="InterPro" id="IPR011650">
    <property type="entry name" value="Peptidase_M20_dimer"/>
</dbReference>
<dbReference type="InterPro" id="IPR050072">
    <property type="entry name" value="Peptidase_M20A"/>
</dbReference>
<dbReference type="NCBIfam" id="TIGR01246">
    <property type="entry name" value="dapE_proteo"/>
    <property type="match status" value="1"/>
</dbReference>
<dbReference type="NCBIfam" id="NF009557">
    <property type="entry name" value="PRK13009.1"/>
    <property type="match status" value="1"/>
</dbReference>
<dbReference type="PANTHER" id="PTHR43808">
    <property type="entry name" value="ACETYLORNITHINE DEACETYLASE"/>
    <property type="match status" value="1"/>
</dbReference>
<dbReference type="PANTHER" id="PTHR43808:SF31">
    <property type="entry name" value="N-ACETYL-L-CITRULLINE DEACETYLASE"/>
    <property type="match status" value="1"/>
</dbReference>
<dbReference type="Pfam" id="PF07687">
    <property type="entry name" value="M20_dimer"/>
    <property type="match status" value="1"/>
</dbReference>
<dbReference type="Pfam" id="PF01546">
    <property type="entry name" value="Peptidase_M20"/>
    <property type="match status" value="1"/>
</dbReference>
<dbReference type="SUPFAM" id="SSF55031">
    <property type="entry name" value="Bacterial exopeptidase dimerisation domain"/>
    <property type="match status" value="1"/>
</dbReference>
<dbReference type="SUPFAM" id="SSF53187">
    <property type="entry name" value="Zn-dependent exopeptidases"/>
    <property type="match status" value="1"/>
</dbReference>
<dbReference type="PROSITE" id="PS00759">
    <property type="entry name" value="ARGE_DAPE_CPG2_2"/>
    <property type="match status" value="1"/>
</dbReference>
<reference key="1">
    <citation type="journal article" date="2011" name="Stand. Genomic Sci.">
        <title>Complete genome sequence of Parvibaculum lavamentivorans type strain (DS-1(T)).</title>
        <authorList>
            <person name="Schleheck D."/>
            <person name="Weiss M."/>
            <person name="Pitluck S."/>
            <person name="Bruce D."/>
            <person name="Land M.L."/>
            <person name="Han S."/>
            <person name="Saunders E."/>
            <person name="Tapia R."/>
            <person name="Detter C."/>
            <person name="Brettin T."/>
            <person name="Han J."/>
            <person name="Woyke T."/>
            <person name="Goodwin L."/>
            <person name="Pennacchio L."/>
            <person name="Nolan M."/>
            <person name="Cook A.M."/>
            <person name="Kjelleberg S."/>
            <person name="Thomas T."/>
        </authorList>
    </citation>
    <scope>NUCLEOTIDE SEQUENCE [LARGE SCALE GENOMIC DNA]</scope>
    <source>
        <strain>DS-1 / DSM 13023 / NCIMB 13966</strain>
    </source>
</reference>
<protein>
    <recommendedName>
        <fullName evidence="1">Succinyl-diaminopimelate desuccinylase</fullName>
        <shortName evidence="1">SDAP desuccinylase</shortName>
        <ecNumber evidence="1">3.5.1.18</ecNumber>
    </recommendedName>
    <alternativeName>
        <fullName evidence="1">N-succinyl-LL-2,6-diaminoheptanedioate amidohydrolase</fullName>
    </alternativeName>
</protein>
<comment type="function">
    <text evidence="1">Catalyzes the hydrolysis of N-succinyl-L,L-diaminopimelic acid (SDAP), forming succinate and LL-2,6-diaminopimelate (DAP), an intermediate involved in the bacterial biosynthesis of lysine and meso-diaminopimelic acid, an essential component of bacterial cell walls.</text>
</comment>
<comment type="catalytic activity">
    <reaction evidence="1">
        <text>N-succinyl-(2S,6S)-2,6-diaminopimelate + H2O = (2S,6S)-2,6-diaminopimelate + succinate</text>
        <dbReference type="Rhea" id="RHEA:22608"/>
        <dbReference type="ChEBI" id="CHEBI:15377"/>
        <dbReference type="ChEBI" id="CHEBI:30031"/>
        <dbReference type="ChEBI" id="CHEBI:57609"/>
        <dbReference type="ChEBI" id="CHEBI:58087"/>
        <dbReference type="EC" id="3.5.1.18"/>
    </reaction>
</comment>
<comment type="cofactor">
    <cofactor evidence="1">
        <name>Zn(2+)</name>
        <dbReference type="ChEBI" id="CHEBI:29105"/>
    </cofactor>
    <cofactor evidence="1">
        <name>Co(2+)</name>
        <dbReference type="ChEBI" id="CHEBI:48828"/>
    </cofactor>
    <text evidence="1">Binds 2 Zn(2+) or Co(2+) ions per subunit.</text>
</comment>
<comment type="pathway">
    <text evidence="1">Amino-acid biosynthesis; L-lysine biosynthesis via DAP pathway; LL-2,6-diaminopimelate from (S)-tetrahydrodipicolinate (succinylase route): step 3/3.</text>
</comment>
<comment type="subunit">
    <text evidence="1">Homodimer.</text>
</comment>
<comment type="similarity">
    <text evidence="1">Belongs to the peptidase M20A family. DapE subfamily.</text>
</comment>
<gene>
    <name evidence="1" type="primary">dapE</name>
    <name type="ordered locus">Plav_0266</name>
</gene>
<feature type="chain" id="PRO_0000375640" description="Succinyl-diaminopimelate desuccinylase">
    <location>
        <begin position="1"/>
        <end position="395"/>
    </location>
</feature>
<feature type="active site" evidence="1">
    <location>
        <position position="83"/>
    </location>
</feature>
<feature type="active site" description="Proton acceptor" evidence="1">
    <location>
        <position position="146"/>
    </location>
</feature>
<feature type="binding site" evidence="1">
    <location>
        <position position="81"/>
    </location>
    <ligand>
        <name>Zn(2+)</name>
        <dbReference type="ChEBI" id="CHEBI:29105"/>
        <label>1</label>
    </ligand>
</feature>
<feature type="binding site" evidence="1">
    <location>
        <position position="114"/>
    </location>
    <ligand>
        <name>Zn(2+)</name>
        <dbReference type="ChEBI" id="CHEBI:29105"/>
        <label>1</label>
    </ligand>
</feature>
<feature type="binding site" evidence="1">
    <location>
        <position position="114"/>
    </location>
    <ligand>
        <name>Zn(2+)</name>
        <dbReference type="ChEBI" id="CHEBI:29105"/>
        <label>2</label>
    </ligand>
</feature>
<feature type="binding site" evidence="1">
    <location>
        <position position="147"/>
    </location>
    <ligand>
        <name>Zn(2+)</name>
        <dbReference type="ChEBI" id="CHEBI:29105"/>
        <label>2</label>
    </ligand>
</feature>
<feature type="binding site" evidence="1">
    <location>
        <position position="175"/>
    </location>
    <ligand>
        <name>Zn(2+)</name>
        <dbReference type="ChEBI" id="CHEBI:29105"/>
        <label>1</label>
    </ligand>
</feature>
<feature type="binding site" evidence="1">
    <location>
        <position position="364"/>
    </location>
    <ligand>
        <name>Zn(2+)</name>
        <dbReference type="ChEBI" id="CHEBI:29105"/>
        <label>2</label>
    </ligand>
</feature>
<evidence type="ECO:0000255" key="1">
    <source>
        <dbReference type="HAMAP-Rule" id="MF_01690"/>
    </source>
</evidence>
<sequence length="395" mass="42041">MTAPASSPASPYDPLDIAVELIRCPSVTPDEGGALGVLEKWLAPLGFKCERMRFSAEGTPDVDNLYARLGSGHPHFCFAGHTDVVPVGQADAWSVDPFAADIKDGRLYGRGAADMKSAVASFVAAAERISREGFQGSISLLITGDEEGPSINGTRKMLEKLAARNETIDHCIVGEPTSVEKLGDMIKVGRRGSINGWLTVQGTQGHVAYPHLADNPVPRLLEMLRRLDAHVLDEGTDHFQPSNLEVTTVDIGNTATNVIPGSARATVNIRFNDLHTGASLDKWMRGVLDAVTAEMGGSYSFKTSVSGEAFITEPGAFSALIAEAAKEVTGITPELSTTGGTSDARFIRAYAPVVEIGLPNATMHKADENTGVSEIRQLADIYETVLRGYFAGRAS</sequence>